<feature type="chain" id="PRO_1000050552" description="Ketol-acid reductoisomerase (NADP(+))">
    <location>
        <begin position="1"/>
        <end position="338"/>
    </location>
</feature>
<feature type="domain" description="KARI N-terminal Rossmann" evidence="2">
    <location>
        <begin position="1"/>
        <end position="181"/>
    </location>
</feature>
<feature type="domain" description="KARI C-terminal knotted" evidence="3">
    <location>
        <begin position="182"/>
        <end position="327"/>
    </location>
</feature>
<feature type="active site" evidence="1">
    <location>
        <position position="107"/>
    </location>
</feature>
<feature type="binding site" evidence="1">
    <location>
        <begin position="24"/>
        <end position="27"/>
    </location>
    <ligand>
        <name>NADP(+)</name>
        <dbReference type="ChEBI" id="CHEBI:58349"/>
    </ligand>
</feature>
<feature type="binding site" evidence="1">
    <location>
        <position position="47"/>
    </location>
    <ligand>
        <name>NADP(+)</name>
        <dbReference type="ChEBI" id="CHEBI:58349"/>
    </ligand>
</feature>
<feature type="binding site" evidence="1">
    <location>
        <position position="52"/>
    </location>
    <ligand>
        <name>NADP(+)</name>
        <dbReference type="ChEBI" id="CHEBI:58349"/>
    </ligand>
</feature>
<feature type="binding site" evidence="1">
    <location>
        <position position="133"/>
    </location>
    <ligand>
        <name>NADP(+)</name>
        <dbReference type="ChEBI" id="CHEBI:58349"/>
    </ligand>
</feature>
<feature type="binding site" evidence="1">
    <location>
        <position position="190"/>
    </location>
    <ligand>
        <name>Mg(2+)</name>
        <dbReference type="ChEBI" id="CHEBI:18420"/>
        <label>1</label>
    </ligand>
</feature>
<feature type="binding site" evidence="1">
    <location>
        <position position="190"/>
    </location>
    <ligand>
        <name>Mg(2+)</name>
        <dbReference type="ChEBI" id="CHEBI:18420"/>
        <label>2</label>
    </ligand>
</feature>
<feature type="binding site" evidence="1">
    <location>
        <position position="194"/>
    </location>
    <ligand>
        <name>Mg(2+)</name>
        <dbReference type="ChEBI" id="CHEBI:18420"/>
        <label>1</label>
    </ligand>
</feature>
<feature type="binding site" evidence="1">
    <location>
        <position position="226"/>
    </location>
    <ligand>
        <name>Mg(2+)</name>
        <dbReference type="ChEBI" id="CHEBI:18420"/>
        <label>2</label>
    </ligand>
</feature>
<feature type="binding site" evidence="1">
    <location>
        <position position="230"/>
    </location>
    <ligand>
        <name>Mg(2+)</name>
        <dbReference type="ChEBI" id="CHEBI:18420"/>
        <label>2</label>
    </ligand>
</feature>
<feature type="binding site" evidence="1">
    <location>
        <position position="251"/>
    </location>
    <ligand>
        <name>substrate</name>
    </ligand>
</feature>
<evidence type="ECO:0000255" key="1">
    <source>
        <dbReference type="HAMAP-Rule" id="MF_00435"/>
    </source>
</evidence>
<evidence type="ECO:0000255" key="2">
    <source>
        <dbReference type="PROSITE-ProRule" id="PRU01197"/>
    </source>
</evidence>
<evidence type="ECO:0000255" key="3">
    <source>
        <dbReference type="PROSITE-ProRule" id="PRU01198"/>
    </source>
</evidence>
<name>ILVC_POLSJ</name>
<reference key="1">
    <citation type="journal article" date="2008" name="Appl. Environ. Microbiol.">
        <title>The genome of Polaromonas sp. strain JS666: insights into the evolution of a hydrocarbon- and xenobiotic-degrading bacterium, and features of relevance to biotechnology.</title>
        <authorList>
            <person name="Mattes T.E."/>
            <person name="Alexander A.K."/>
            <person name="Richardson P.M."/>
            <person name="Munk A.C."/>
            <person name="Han C.S."/>
            <person name="Stothard P."/>
            <person name="Coleman N.V."/>
        </authorList>
    </citation>
    <scope>NUCLEOTIDE SEQUENCE [LARGE SCALE GENOMIC DNA]</scope>
    <source>
        <strain>JS666 / ATCC BAA-500</strain>
    </source>
</reference>
<organism>
    <name type="scientific">Polaromonas sp. (strain JS666 / ATCC BAA-500)</name>
    <dbReference type="NCBI Taxonomy" id="296591"/>
    <lineage>
        <taxon>Bacteria</taxon>
        <taxon>Pseudomonadati</taxon>
        <taxon>Pseudomonadota</taxon>
        <taxon>Betaproteobacteria</taxon>
        <taxon>Burkholderiales</taxon>
        <taxon>Comamonadaceae</taxon>
        <taxon>Polaromonas</taxon>
    </lineage>
</organism>
<proteinExistence type="inferred from homology"/>
<dbReference type="EC" id="1.1.1.86" evidence="1"/>
<dbReference type="EMBL" id="CP000316">
    <property type="protein sequence ID" value="ABE44242.1"/>
    <property type="molecule type" value="Genomic_DNA"/>
</dbReference>
<dbReference type="RefSeq" id="WP_011483240.1">
    <property type="nucleotide sequence ID" value="NC_007948.1"/>
</dbReference>
<dbReference type="SMR" id="Q12B50"/>
<dbReference type="STRING" id="296591.Bpro_2319"/>
<dbReference type="KEGG" id="pol:Bpro_2319"/>
<dbReference type="eggNOG" id="COG0059">
    <property type="taxonomic scope" value="Bacteria"/>
</dbReference>
<dbReference type="HOGENOM" id="CLU_033821_0_1_4"/>
<dbReference type="OrthoDB" id="9804088at2"/>
<dbReference type="UniPathway" id="UPA00047">
    <property type="reaction ID" value="UER00056"/>
</dbReference>
<dbReference type="UniPathway" id="UPA00049">
    <property type="reaction ID" value="UER00060"/>
</dbReference>
<dbReference type="Proteomes" id="UP000001983">
    <property type="component" value="Chromosome"/>
</dbReference>
<dbReference type="GO" id="GO:0005829">
    <property type="term" value="C:cytosol"/>
    <property type="evidence" value="ECO:0007669"/>
    <property type="project" value="TreeGrafter"/>
</dbReference>
<dbReference type="GO" id="GO:0004455">
    <property type="term" value="F:ketol-acid reductoisomerase activity"/>
    <property type="evidence" value="ECO:0007669"/>
    <property type="project" value="UniProtKB-UniRule"/>
</dbReference>
<dbReference type="GO" id="GO:0000287">
    <property type="term" value="F:magnesium ion binding"/>
    <property type="evidence" value="ECO:0007669"/>
    <property type="project" value="UniProtKB-UniRule"/>
</dbReference>
<dbReference type="GO" id="GO:0050661">
    <property type="term" value="F:NADP binding"/>
    <property type="evidence" value="ECO:0007669"/>
    <property type="project" value="InterPro"/>
</dbReference>
<dbReference type="GO" id="GO:0009097">
    <property type="term" value="P:isoleucine biosynthetic process"/>
    <property type="evidence" value="ECO:0007669"/>
    <property type="project" value="UniProtKB-UniRule"/>
</dbReference>
<dbReference type="GO" id="GO:0009099">
    <property type="term" value="P:L-valine biosynthetic process"/>
    <property type="evidence" value="ECO:0007669"/>
    <property type="project" value="UniProtKB-UniRule"/>
</dbReference>
<dbReference type="FunFam" id="3.40.50.720:FF:000023">
    <property type="entry name" value="Ketol-acid reductoisomerase (NADP(+))"/>
    <property type="match status" value="1"/>
</dbReference>
<dbReference type="Gene3D" id="6.10.240.10">
    <property type="match status" value="1"/>
</dbReference>
<dbReference type="Gene3D" id="3.40.50.720">
    <property type="entry name" value="NAD(P)-binding Rossmann-like Domain"/>
    <property type="match status" value="1"/>
</dbReference>
<dbReference type="HAMAP" id="MF_00435">
    <property type="entry name" value="IlvC"/>
    <property type="match status" value="1"/>
</dbReference>
<dbReference type="InterPro" id="IPR008927">
    <property type="entry name" value="6-PGluconate_DH-like_C_sf"/>
</dbReference>
<dbReference type="InterPro" id="IPR013023">
    <property type="entry name" value="KARI"/>
</dbReference>
<dbReference type="InterPro" id="IPR000506">
    <property type="entry name" value="KARI_C"/>
</dbReference>
<dbReference type="InterPro" id="IPR013116">
    <property type="entry name" value="KARI_N"/>
</dbReference>
<dbReference type="InterPro" id="IPR014359">
    <property type="entry name" value="KARI_prok"/>
</dbReference>
<dbReference type="InterPro" id="IPR036291">
    <property type="entry name" value="NAD(P)-bd_dom_sf"/>
</dbReference>
<dbReference type="NCBIfam" id="TIGR00465">
    <property type="entry name" value="ilvC"/>
    <property type="match status" value="1"/>
</dbReference>
<dbReference type="NCBIfam" id="NF004017">
    <property type="entry name" value="PRK05479.1"/>
    <property type="match status" value="1"/>
</dbReference>
<dbReference type="NCBIfam" id="NF009940">
    <property type="entry name" value="PRK13403.1"/>
    <property type="match status" value="1"/>
</dbReference>
<dbReference type="PANTHER" id="PTHR21371">
    <property type="entry name" value="KETOL-ACID REDUCTOISOMERASE, MITOCHONDRIAL"/>
    <property type="match status" value="1"/>
</dbReference>
<dbReference type="PANTHER" id="PTHR21371:SF1">
    <property type="entry name" value="KETOL-ACID REDUCTOISOMERASE, MITOCHONDRIAL"/>
    <property type="match status" value="1"/>
</dbReference>
<dbReference type="Pfam" id="PF01450">
    <property type="entry name" value="KARI_C"/>
    <property type="match status" value="1"/>
</dbReference>
<dbReference type="Pfam" id="PF07991">
    <property type="entry name" value="KARI_N"/>
    <property type="match status" value="1"/>
</dbReference>
<dbReference type="PIRSF" id="PIRSF000116">
    <property type="entry name" value="IlvC_gammaproteo"/>
    <property type="match status" value="1"/>
</dbReference>
<dbReference type="SUPFAM" id="SSF48179">
    <property type="entry name" value="6-phosphogluconate dehydrogenase C-terminal domain-like"/>
    <property type="match status" value="1"/>
</dbReference>
<dbReference type="SUPFAM" id="SSF51735">
    <property type="entry name" value="NAD(P)-binding Rossmann-fold domains"/>
    <property type="match status" value="1"/>
</dbReference>
<dbReference type="PROSITE" id="PS51851">
    <property type="entry name" value="KARI_C"/>
    <property type="match status" value="1"/>
</dbReference>
<dbReference type="PROSITE" id="PS51850">
    <property type="entry name" value="KARI_N"/>
    <property type="match status" value="1"/>
</dbReference>
<sequence>MKVFYDKDCDLSLIKGKTVAIIGYGSQGHAHAQNLNDSGVKVVVGLRKGGASWPKVEKAGLKVAEVADAVKAADVVMILLPDEQIGAVYANDVAPNIKQGASLVFAHGFNVHYGAVIPRADLDVWMVAPKAPGHTVRNTYTQGGGVPHLVAVHQDKSGKARDLALSYAMANGGGKAGIIETNFREETETDLFGEQAVLCGGTVELIKAGFETLVEAGYAPEMAYFECLHELKLIVDLIYEGGIANMNYSISNNAEYGEYVTGPNIVTSATKEAMRKCLKDIQTGEYAKSFLLENRVGAPTLLSRRRLNAEHQIEIVGEKLRAMMPWIAKNKLVDQTRN</sequence>
<comment type="function">
    <text evidence="1">Involved in the biosynthesis of branched-chain amino acids (BCAA). Catalyzes an alkyl-migration followed by a ketol-acid reduction of (S)-2-acetolactate (S2AL) to yield (R)-2,3-dihydroxy-isovalerate. In the isomerase reaction, S2AL is rearranged via a Mg-dependent methyl migration to produce 3-hydroxy-3-methyl-2-ketobutyrate (HMKB). In the reductase reaction, this 2-ketoacid undergoes a metal-dependent reduction by NADPH to yield (R)-2,3-dihydroxy-isovalerate.</text>
</comment>
<comment type="catalytic activity">
    <reaction evidence="1">
        <text>(2R)-2,3-dihydroxy-3-methylbutanoate + NADP(+) = (2S)-2-acetolactate + NADPH + H(+)</text>
        <dbReference type="Rhea" id="RHEA:22068"/>
        <dbReference type="ChEBI" id="CHEBI:15378"/>
        <dbReference type="ChEBI" id="CHEBI:49072"/>
        <dbReference type="ChEBI" id="CHEBI:57783"/>
        <dbReference type="ChEBI" id="CHEBI:58349"/>
        <dbReference type="ChEBI" id="CHEBI:58476"/>
        <dbReference type="EC" id="1.1.1.86"/>
    </reaction>
</comment>
<comment type="catalytic activity">
    <reaction evidence="1">
        <text>(2R,3R)-2,3-dihydroxy-3-methylpentanoate + NADP(+) = (S)-2-ethyl-2-hydroxy-3-oxobutanoate + NADPH + H(+)</text>
        <dbReference type="Rhea" id="RHEA:13493"/>
        <dbReference type="ChEBI" id="CHEBI:15378"/>
        <dbReference type="ChEBI" id="CHEBI:49256"/>
        <dbReference type="ChEBI" id="CHEBI:49258"/>
        <dbReference type="ChEBI" id="CHEBI:57783"/>
        <dbReference type="ChEBI" id="CHEBI:58349"/>
        <dbReference type="EC" id="1.1.1.86"/>
    </reaction>
</comment>
<comment type="cofactor">
    <cofactor evidence="1">
        <name>Mg(2+)</name>
        <dbReference type="ChEBI" id="CHEBI:18420"/>
    </cofactor>
    <text evidence="1">Binds 2 magnesium ions per subunit.</text>
</comment>
<comment type="pathway">
    <text evidence="1">Amino-acid biosynthesis; L-isoleucine biosynthesis; L-isoleucine from 2-oxobutanoate: step 2/4.</text>
</comment>
<comment type="pathway">
    <text evidence="1">Amino-acid biosynthesis; L-valine biosynthesis; L-valine from pyruvate: step 2/4.</text>
</comment>
<comment type="similarity">
    <text evidence="1">Belongs to the ketol-acid reductoisomerase family.</text>
</comment>
<protein>
    <recommendedName>
        <fullName evidence="1">Ketol-acid reductoisomerase (NADP(+))</fullName>
        <shortName evidence="1">KARI</shortName>
        <ecNumber evidence="1">1.1.1.86</ecNumber>
    </recommendedName>
    <alternativeName>
        <fullName evidence="1">Acetohydroxy-acid isomeroreductase</fullName>
        <shortName evidence="1">AHIR</shortName>
    </alternativeName>
    <alternativeName>
        <fullName evidence="1">Alpha-keto-beta-hydroxylacyl reductoisomerase</fullName>
    </alternativeName>
    <alternativeName>
        <fullName evidence="1">Ketol-acid reductoisomerase type 1</fullName>
    </alternativeName>
    <alternativeName>
        <fullName evidence="1">Ketol-acid reductoisomerase type I</fullName>
    </alternativeName>
</protein>
<accession>Q12B50</accession>
<keyword id="KW-0028">Amino-acid biosynthesis</keyword>
<keyword id="KW-0100">Branched-chain amino acid biosynthesis</keyword>
<keyword id="KW-0460">Magnesium</keyword>
<keyword id="KW-0479">Metal-binding</keyword>
<keyword id="KW-0521">NADP</keyword>
<keyword id="KW-0560">Oxidoreductase</keyword>
<keyword id="KW-1185">Reference proteome</keyword>
<gene>
    <name evidence="1" type="primary">ilvC</name>
    <name type="ordered locus">Bpro_2319</name>
</gene>